<sequence length="285" mass="31049">MVKRSRATRLSPSIWSGWESPQCRSIRARLLLPRGRSRPPNADCCWNQLAVTPDTRMPASSAAGRDAAAYDAWYDSPTGRPILATEVAALRPLIEVFAQPRLEIGVGTGRFADLLGVRFGLDPSRDALMFARRRGVLVANAVGEAVPFVSRHFGAVLMAFTLCFVTDPAAIFRETRRLLADGGGLVIGFLPRGTPWADLYALRAARGQPGYRDARFYTAAELEQLLADSGFRVIARRCTLHQPPGLARYDIEAAHDGIQAGAGFVAISAVDQAHEPKDDHPLESE</sequence>
<evidence type="ECO:0000269" key="1">
    <source>
    </source>
</evidence>
<evidence type="ECO:0000269" key="2">
    <source>
    </source>
</evidence>
<evidence type="ECO:0000269" key="3">
    <source>
    </source>
</evidence>
<evidence type="ECO:0000269" key="4">
    <source>
    </source>
</evidence>
<evidence type="ECO:0000305" key="5"/>
<organism>
    <name type="scientific">Mycobacterium tuberculosis (strain ATCC 25618 / H37Rv)</name>
    <dbReference type="NCBI Taxonomy" id="83332"/>
    <lineage>
        <taxon>Bacteria</taxon>
        <taxon>Bacillati</taxon>
        <taxon>Actinomycetota</taxon>
        <taxon>Actinomycetes</taxon>
        <taxon>Mycobacteriales</taxon>
        <taxon>Mycobacteriaceae</taxon>
        <taxon>Mycobacterium</taxon>
        <taxon>Mycobacterium tuberculosis complex</taxon>
    </lineage>
</organism>
<reference key="1">
    <citation type="journal article" date="1998" name="Nature">
        <title>Deciphering the biology of Mycobacterium tuberculosis from the complete genome sequence.</title>
        <authorList>
            <person name="Cole S.T."/>
            <person name="Brosch R."/>
            <person name="Parkhill J."/>
            <person name="Garnier T."/>
            <person name="Churcher C.M."/>
            <person name="Harris D.E."/>
            <person name="Gordon S.V."/>
            <person name="Eiglmeier K."/>
            <person name="Gas S."/>
            <person name="Barry C.E. III"/>
            <person name="Tekaia F."/>
            <person name="Badcock K."/>
            <person name="Basham D."/>
            <person name="Brown D."/>
            <person name="Chillingworth T."/>
            <person name="Connor R."/>
            <person name="Davies R.M."/>
            <person name="Devlin K."/>
            <person name="Feltwell T."/>
            <person name="Gentles S."/>
            <person name="Hamlin N."/>
            <person name="Holroyd S."/>
            <person name="Hornsby T."/>
            <person name="Jagels K."/>
            <person name="Krogh A."/>
            <person name="McLean J."/>
            <person name="Moule S."/>
            <person name="Murphy L.D."/>
            <person name="Oliver S."/>
            <person name="Osborne J."/>
            <person name="Quail M.A."/>
            <person name="Rajandream M.A."/>
            <person name="Rogers J."/>
            <person name="Rutter S."/>
            <person name="Seeger K."/>
            <person name="Skelton S."/>
            <person name="Squares S."/>
            <person name="Squares R."/>
            <person name="Sulston J.E."/>
            <person name="Taylor K."/>
            <person name="Whitehead S."/>
            <person name="Barrell B.G."/>
        </authorList>
    </citation>
    <scope>NUCLEOTIDE SEQUENCE [LARGE SCALE GENOMIC DNA]</scope>
    <source>
        <strain>ATCC 25618 / H37Rv</strain>
    </source>
</reference>
<reference key="2">
    <citation type="journal article" date="2001" name="Proc. Natl. Acad. Sci. U.S.A.">
        <title>Regulation of the Mycobacterium tuberculosis hypoxic response gene encoding alpha -crystallin.</title>
        <authorList>
            <person name="Sherman D.R."/>
            <person name="Voskuil M."/>
            <person name="Schnappinger D."/>
            <person name="Liao R."/>
            <person name="Harrell M.I."/>
            <person name="Schoolnik G.K."/>
        </authorList>
    </citation>
    <scope>INDUCTION BY HYPOXIA</scope>
    <source>
        <strain>ATCC 25618 / H37Rv</strain>
    </source>
</reference>
<reference key="3">
    <citation type="journal article" date="2003" name="J. Exp. Med.">
        <title>Inhibition of respiration by nitric oxide induces a Mycobacterium tuberculosis dormancy program.</title>
        <authorList>
            <person name="Voskuil M.I."/>
            <person name="Schnappinger D."/>
            <person name="Visconti K.C."/>
            <person name="Harrell M.I."/>
            <person name="Dolganov G.M."/>
            <person name="Sherman D.R."/>
            <person name="Schoolnik G.K."/>
        </authorList>
    </citation>
    <scope>INDUCTION BY NITRIC OXIDE (NO) AND BY HYPOXIA</scope>
    <scope>DORMANCY REGULON</scope>
    <source>
        <strain>ATCC 25618 / H37Rv</strain>
    </source>
</reference>
<reference key="4">
    <citation type="journal article" date="2008" name="Cell Host Microbe">
        <title>Mycobacterium tuberculosis senses host-derived carbon monoxide during macrophage infection.</title>
        <authorList>
            <person name="Shiloh M.U."/>
            <person name="Manzanillo P."/>
            <person name="Cox J.S."/>
        </authorList>
    </citation>
    <scope>INDUCTION BY CARBON MONOXIDE (CO)</scope>
    <source>
        <strain>ATCC 35801 / TMC 107 / Erdman</strain>
    </source>
</reference>
<reference key="5">
    <citation type="journal article" date="2008" name="J. Biol. Chem.">
        <title>Heme oxygenase-1-derived carbon monoxide induces the Mycobacterium tuberculosis dormancy regulon.</title>
        <authorList>
            <person name="Kumar A."/>
            <person name="Deshane J.S."/>
            <person name="Crossman D.K."/>
            <person name="Bolisetty S."/>
            <person name="Yan B.S."/>
            <person name="Kramnik I."/>
            <person name="Agarwal A."/>
            <person name="Steyn A.J."/>
        </authorList>
    </citation>
    <scope>INDUCTION BY CARBON MONOXIDE (CO)</scope>
    <scope>DORMANCY REGULON</scope>
    <source>
        <strain>ATCC 25618 / H37Rv</strain>
    </source>
</reference>
<reference key="6">
    <citation type="journal article" date="2011" name="Mol. Cell. Proteomics">
        <title>Proteogenomic analysis of Mycobacterium tuberculosis by high resolution mass spectrometry.</title>
        <authorList>
            <person name="Kelkar D.S."/>
            <person name="Kumar D."/>
            <person name="Kumar P."/>
            <person name="Balakrishnan L."/>
            <person name="Muthusamy B."/>
            <person name="Yadav A.K."/>
            <person name="Shrivastava P."/>
            <person name="Marimuthu A."/>
            <person name="Anand S."/>
            <person name="Sundaram H."/>
            <person name="Kingsbury R."/>
            <person name="Harsha H.C."/>
            <person name="Nair B."/>
            <person name="Prasad T.S."/>
            <person name="Chauhan D.S."/>
            <person name="Katoch K."/>
            <person name="Katoch V.M."/>
            <person name="Kumar P."/>
            <person name="Chaerkady R."/>
            <person name="Ramachandran S."/>
            <person name="Dash D."/>
            <person name="Pandey A."/>
        </authorList>
    </citation>
    <scope>IDENTIFICATION BY MASS SPECTROMETRY [LARGE SCALE ANALYSIS]</scope>
    <source>
        <strain>ATCC 25618 / H37Rv</strain>
    </source>
</reference>
<dbReference type="EMBL" id="AL123456">
    <property type="protein sequence ID" value="CCP44775.1"/>
    <property type="molecule type" value="Genomic_DNA"/>
</dbReference>
<dbReference type="PIR" id="A70759">
    <property type="entry name" value="A70759"/>
</dbReference>
<dbReference type="RefSeq" id="NP_216519.1">
    <property type="nucleotide sequence ID" value="NC_000962.3"/>
</dbReference>
<dbReference type="RefSeq" id="WP_003410049.1">
    <property type="nucleotide sequence ID" value="NC_000962.3"/>
</dbReference>
<dbReference type="SMR" id="P9WJZ5"/>
<dbReference type="STRING" id="83332.Rv2003c"/>
<dbReference type="PaxDb" id="83332-Rv2003c"/>
<dbReference type="DNASU" id="888818"/>
<dbReference type="GeneID" id="888818"/>
<dbReference type="KEGG" id="mtu:Rv2003c"/>
<dbReference type="KEGG" id="mtv:RVBD_2003c"/>
<dbReference type="PATRIC" id="fig|83332.111.peg.2229"/>
<dbReference type="TubercuList" id="Rv2003c"/>
<dbReference type="eggNOG" id="COG2226">
    <property type="taxonomic scope" value="Bacteria"/>
</dbReference>
<dbReference type="InParanoid" id="P9WJZ5"/>
<dbReference type="OrthoDB" id="5566900at2"/>
<dbReference type="PhylomeDB" id="P9WJZ5"/>
<dbReference type="Proteomes" id="UP000001584">
    <property type="component" value="Chromosome"/>
</dbReference>
<dbReference type="GO" id="GO:0008168">
    <property type="term" value="F:methyltransferase activity"/>
    <property type="evidence" value="ECO:0000318"/>
    <property type="project" value="GO_Central"/>
</dbReference>
<dbReference type="GO" id="GO:0008757">
    <property type="term" value="F:S-adenosylmethionine-dependent methyltransferase activity"/>
    <property type="evidence" value="ECO:0007669"/>
    <property type="project" value="InterPro"/>
</dbReference>
<dbReference type="CDD" id="cd02440">
    <property type="entry name" value="AdoMet_MTases"/>
    <property type="match status" value="1"/>
</dbReference>
<dbReference type="Gene3D" id="3.40.50.150">
    <property type="entry name" value="Vaccinia Virus protein VP39"/>
    <property type="match status" value="1"/>
</dbReference>
<dbReference type="InterPro" id="IPR013216">
    <property type="entry name" value="Methyltransf_11"/>
</dbReference>
<dbReference type="InterPro" id="IPR029063">
    <property type="entry name" value="SAM-dependent_MTases_sf"/>
</dbReference>
<dbReference type="Pfam" id="PF08241">
    <property type="entry name" value="Methyltransf_11"/>
    <property type="match status" value="1"/>
</dbReference>
<dbReference type="SUPFAM" id="SSF53335">
    <property type="entry name" value="S-adenosyl-L-methionine-dependent methyltransferases"/>
    <property type="match status" value="1"/>
</dbReference>
<proteinExistence type="evidence at protein level"/>
<protein>
    <recommendedName>
        <fullName>Uncharacterized protein Rv2003c</fullName>
    </recommendedName>
</protein>
<accession>P9WJZ5</accession>
<accession>L0TB26</accession>
<accession>P64919</accession>
<accession>Q10853</accession>
<keyword id="KW-1185">Reference proteome</keyword>
<comment type="induction">
    <text evidence="1 2 3 4">A member of the dormancy regulon. Induced in response to reduced oxygen tension (hypoxia), low levels of nitric oxide (NO) and carbon monoxide (CO). It is hoped that this regulon will give insight into the latent, or dormant phase of infection.</text>
</comment>
<comment type="similarity">
    <text evidence="5">Belongs to the methyltransferase superfamily.</text>
</comment>
<name>Y2003_MYCTU</name>
<gene>
    <name type="ordered locus">Rv2003c</name>
    <name type="ORF">MTCY39.14</name>
</gene>
<feature type="chain" id="PRO_0000103930" description="Uncharacterized protein Rv2003c">
    <location>
        <begin position="1"/>
        <end position="285"/>
    </location>
</feature>